<organism>
    <name type="scientific">Homo sapiens</name>
    <name type="common">Human</name>
    <dbReference type="NCBI Taxonomy" id="9606"/>
    <lineage>
        <taxon>Eukaryota</taxon>
        <taxon>Metazoa</taxon>
        <taxon>Chordata</taxon>
        <taxon>Craniata</taxon>
        <taxon>Vertebrata</taxon>
        <taxon>Euteleostomi</taxon>
        <taxon>Mammalia</taxon>
        <taxon>Eutheria</taxon>
        <taxon>Euarchontoglires</taxon>
        <taxon>Primates</taxon>
        <taxon>Haplorrhini</taxon>
        <taxon>Catarrhini</taxon>
        <taxon>Hominidae</taxon>
        <taxon>Homo</taxon>
    </lineage>
</organism>
<dbReference type="EC" id="2.4.2.31"/>
<dbReference type="EMBL" id="S74683">
    <property type="protein sequence ID" value="AAB32387.1"/>
    <property type="molecule type" value="mRNA"/>
</dbReference>
<dbReference type="EMBL" id="CH471158">
    <property type="protein sequence ID" value="EAX02559.1"/>
    <property type="molecule type" value="Genomic_DNA"/>
</dbReference>
<dbReference type="EMBL" id="BC069102">
    <property type="protein sequence ID" value="AAH69102.1"/>
    <property type="molecule type" value="mRNA"/>
</dbReference>
<dbReference type="EMBL" id="BC111729">
    <property type="protein sequence ID" value="AAI11730.1"/>
    <property type="molecule type" value="mRNA"/>
</dbReference>
<dbReference type="EMBL" id="AJ291430">
    <property type="protein sequence ID" value="CAC69964.1"/>
    <property type="molecule type" value="mRNA"/>
</dbReference>
<dbReference type="CCDS" id="CCDS7744.1"/>
<dbReference type="PIR" id="A55966">
    <property type="entry name" value="A55966"/>
</dbReference>
<dbReference type="RefSeq" id="NP_004305.2">
    <property type="nucleotide sequence ID" value="NM_004314.3"/>
</dbReference>
<dbReference type="RefSeq" id="XP_011518416.1">
    <property type="nucleotide sequence ID" value="XM_011520114.4"/>
</dbReference>
<dbReference type="RefSeq" id="XP_016873252.1">
    <property type="nucleotide sequence ID" value="XM_017017763.3"/>
</dbReference>
<dbReference type="SMR" id="P52961"/>
<dbReference type="BioGRID" id="106910">
    <property type="interactions" value="14"/>
</dbReference>
<dbReference type="FunCoup" id="P52961">
    <property type="interactions" value="528"/>
</dbReference>
<dbReference type="IntAct" id="P52961">
    <property type="interactions" value="6"/>
</dbReference>
<dbReference type="STRING" id="9606.ENSP00000250693"/>
<dbReference type="ChEMBL" id="CHEMBL2158"/>
<dbReference type="DrugBank" id="DB01854">
    <property type="generic name" value="5-Bromonicotinamide"/>
</dbReference>
<dbReference type="GlyCosmos" id="P52961">
    <property type="glycosylation" value="2 sites, No reported glycans"/>
</dbReference>
<dbReference type="GlyGen" id="P52961">
    <property type="glycosylation" value="2 sites"/>
</dbReference>
<dbReference type="PhosphoSitePlus" id="P52961"/>
<dbReference type="BioMuta" id="ART1"/>
<dbReference type="DMDM" id="206729882"/>
<dbReference type="jPOST" id="P52961"/>
<dbReference type="MassIVE" id="P52961"/>
<dbReference type="PaxDb" id="9606-ENSP00000250693"/>
<dbReference type="PeptideAtlas" id="P52961"/>
<dbReference type="Antibodypedia" id="23357">
    <property type="antibodies" value="212 antibodies from 22 providers"/>
</dbReference>
<dbReference type="DNASU" id="417"/>
<dbReference type="Ensembl" id="ENST00000250693.2">
    <property type="protein sequence ID" value="ENSP00000250693.1"/>
    <property type="gene ID" value="ENSG00000129744.3"/>
</dbReference>
<dbReference type="GeneID" id="417"/>
<dbReference type="KEGG" id="hsa:417"/>
<dbReference type="MANE-Select" id="ENST00000250693.2">
    <property type="protein sequence ID" value="ENSP00000250693.1"/>
    <property type="RefSeq nucleotide sequence ID" value="NM_004314.3"/>
    <property type="RefSeq protein sequence ID" value="NP_004305.2"/>
</dbReference>
<dbReference type="UCSC" id="uc001lye.1">
    <property type="organism name" value="human"/>
</dbReference>
<dbReference type="AGR" id="HGNC:723"/>
<dbReference type="CTD" id="417"/>
<dbReference type="DisGeNET" id="417"/>
<dbReference type="GeneCards" id="ART1"/>
<dbReference type="HGNC" id="HGNC:723">
    <property type="gene designation" value="ART1"/>
</dbReference>
<dbReference type="HPA" id="ENSG00000129744">
    <property type="expression patterns" value="Group enriched (skeletal muscle, tongue)"/>
</dbReference>
<dbReference type="MIM" id="601625">
    <property type="type" value="gene"/>
</dbReference>
<dbReference type="neXtProt" id="NX_P52961"/>
<dbReference type="OpenTargets" id="ENSG00000129744"/>
<dbReference type="PharmGKB" id="PA25014"/>
<dbReference type="VEuPathDB" id="HostDB:ENSG00000129744"/>
<dbReference type="eggNOG" id="ENOG502QUE9">
    <property type="taxonomic scope" value="Eukaryota"/>
</dbReference>
<dbReference type="GeneTree" id="ENSGT01030000234601"/>
<dbReference type="HOGENOM" id="CLU_059744_1_0_1"/>
<dbReference type="InParanoid" id="P52961"/>
<dbReference type="OMA" id="FETFQVV"/>
<dbReference type="OrthoDB" id="423533at2759"/>
<dbReference type="PAN-GO" id="P52961">
    <property type="GO annotations" value="2 GO annotations based on evolutionary models"/>
</dbReference>
<dbReference type="PhylomeDB" id="P52961"/>
<dbReference type="TreeFam" id="TF335356"/>
<dbReference type="BRENDA" id="2.4.2.31">
    <property type="organism ID" value="2681"/>
</dbReference>
<dbReference type="PathwayCommons" id="P52961"/>
<dbReference type="Reactome" id="R-HSA-1462054">
    <property type="pathway name" value="Alpha-defensins"/>
</dbReference>
<dbReference type="SignaLink" id="P52961"/>
<dbReference type="BioGRID-ORCS" id="417">
    <property type="hits" value="9 hits in 1150 CRISPR screens"/>
</dbReference>
<dbReference type="ChiTaRS" id="ART1">
    <property type="organism name" value="human"/>
</dbReference>
<dbReference type="GenomeRNAi" id="417"/>
<dbReference type="Pharos" id="P52961">
    <property type="development level" value="Tbio"/>
</dbReference>
<dbReference type="PRO" id="PR:P52961"/>
<dbReference type="Proteomes" id="UP000005640">
    <property type="component" value="Chromosome 11"/>
</dbReference>
<dbReference type="RNAct" id="P52961">
    <property type="molecule type" value="protein"/>
</dbReference>
<dbReference type="Bgee" id="ENSG00000129744">
    <property type="expression patterns" value="Expressed in hindlimb stylopod muscle and 87 other cell types or tissues"/>
</dbReference>
<dbReference type="GO" id="GO:0009986">
    <property type="term" value="C:cell surface"/>
    <property type="evidence" value="ECO:0007669"/>
    <property type="project" value="Ensembl"/>
</dbReference>
<dbReference type="GO" id="GO:0005886">
    <property type="term" value="C:plasma membrane"/>
    <property type="evidence" value="ECO:0000304"/>
    <property type="project" value="Reactome"/>
</dbReference>
<dbReference type="GO" id="GO:0033017">
    <property type="term" value="C:sarcoplasmic reticulum membrane"/>
    <property type="evidence" value="ECO:0007669"/>
    <property type="project" value="UniProtKB-SubCell"/>
</dbReference>
<dbReference type="GO" id="GO:0098552">
    <property type="term" value="C:side of membrane"/>
    <property type="evidence" value="ECO:0007669"/>
    <property type="project" value="UniProtKB-KW"/>
</dbReference>
<dbReference type="GO" id="GO:0003950">
    <property type="term" value="F:NAD+ poly-ADP-ribosyltransferase activity"/>
    <property type="evidence" value="ECO:0000318"/>
    <property type="project" value="GO_Central"/>
</dbReference>
<dbReference type="GO" id="GO:0106274">
    <property type="term" value="F:NAD+-protein-arginine ADP-ribosyltransferase activity"/>
    <property type="evidence" value="ECO:0000304"/>
    <property type="project" value="Reactome"/>
</dbReference>
<dbReference type="GO" id="GO:0016779">
    <property type="term" value="F:nucleotidyltransferase activity"/>
    <property type="evidence" value="ECO:0007669"/>
    <property type="project" value="UniProtKB-KW"/>
</dbReference>
<dbReference type="FunFam" id="3.90.176.10:FF:000001">
    <property type="entry name" value="NAD(P)(+)--arginine ADP-ribosyltransferase"/>
    <property type="match status" value="1"/>
</dbReference>
<dbReference type="Gene3D" id="3.90.176.10">
    <property type="entry name" value="Toxin ADP-ribosyltransferase, Chain A, domain 1"/>
    <property type="match status" value="1"/>
</dbReference>
<dbReference type="InterPro" id="IPR050999">
    <property type="entry name" value="ADP-ribosyltransferase_ARG"/>
</dbReference>
<dbReference type="InterPro" id="IPR000768">
    <property type="entry name" value="ART"/>
</dbReference>
<dbReference type="PANTHER" id="PTHR10339">
    <property type="entry name" value="ADP-RIBOSYLTRANSFERASE"/>
    <property type="match status" value="1"/>
</dbReference>
<dbReference type="PANTHER" id="PTHR10339:SF19">
    <property type="entry name" value="GPI-LINKED NAD(P)(+)--ARGININE ADP-RIBOSYLTRANSFERASE 1"/>
    <property type="match status" value="1"/>
</dbReference>
<dbReference type="Pfam" id="PF01129">
    <property type="entry name" value="ART"/>
    <property type="match status" value="1"/>
</dbReference>
<dbReference type="PRINTS" id="PR00970">
    <property type="entry name" value="RIBTRNSFRASE"/>
</dbReference>
<dbReference type="SUPFAM" id="SSF56399">
    <property type="entry name" value="ADP-ribosylation"/>
    <property type="match status" value="1"/>
</dbReference>
<dbReference type="PROSITE" id="PS01291">
    <property type="entry name" value="ART"/>
    <property type="match status" value="1"/>
</dbReference>
<dbReference type="PROSITE" id="PS51996">
    <property type="entry name" value="TR_MART"/>
    <property type="match status" value="1"/>
</dbReference>
<sequence length="327" mass="36335">MQMPAMMSLLLVSVGLMEALQAQSHPITRRDLFSQEIQLDMALASFDDQYAGCAAAMTAALPDLNHTEFQANQVYADSWTLASSQWQERQARWPEWSLSPTRPSPPPLGFRDEHGVALLAYTANSPLHKEFNAAVREAGRSRAHYLHHFSFKTLHFLLTEALQLLGSGQRPPRCHQVFRGVHGLRFRPAGPRATVRLGGFASASLKHVAAQQFGEDTFFGIWTCLGAPIKGYSFFPGEEEVLIPPFETFQVINASRLAQGPARIYLRALGKHSTYNCEYIKDKKCKSGPCHLDNSAMGQSPLSAVWSLLLLLWFLVVRAFPDGPGLL</sequence>
<name>NAR1_HUMAN</name>
<reference key="1">
    <citation type="journal article" date="1994" name="Biochemistry">
        <title>Immunological and structural conservation of mammalian skeletal muscle glycosylphosphatidylinositol-linked ADP-ribosyltransferases.</title>
        <authorList>
            <person name="Okazaki I.J."/>
            <person name="Zolkiewska A."/>
            <person name="Nightingale M.S."/>
            <person name="Moss J."/>
        </authorList>
    </citation>
    <scope>NUCLEOTIDE SEQUENCE [MRNA]</scope>
    <scope>VARIANT PRO-257</scope>
    <source>
        <tissue>Skeletal muscle</tissue>
    </source>
</reference>
<reference key="2">
    <citation type="submission" date="2005-07" db="EMBL/GenBank/DDBJ databases">
        <authorList>
            <person name="Mural R.J."/>
            <person name="Istrail S."/>
            <person name="Sutton G.G."/>
            <person name="Florea L."/>
            <person name="Halpern A.L."/>
            <person name="Mobarry C.M."/>
            <person name="Lippert R."/>
            <person name="Walenz B."/>
            <person name="Shatkay H."/>
            <person name="Dew I."/>
            <person name="Miller J.R."/>
            <person name="Flanigan M.J."/>
            <person name="Edwards N.J."/>
            <person name="Bolanos R."/>
            <person name="Fasulo D."/>
            <person name="Halldorsson B.V."/>
            <person name="Hannenhalli S."/>
            <person name="Turner R."/>
            <person name="Yooseph S."/>
            <person name="Lu F."/>
            <person name="Nusskern D.R."/>
            <person name="Shue B.C."/>
            <person name="Zheng X.H."/>
            <person name="Zhong F."/>
            <person name="Delcher A.L."/>
            <person name="Huson D.H."/>
            <person name="Kravitz S.A."/>
            <person name="Mouchard L."/>
            <person name="Reinert K."/>
            <person name="Remington K.A."/>
            <person name="Clark A.G."/>
            <person name="Waterman M.S."/>
            <person name="Eichler E.E."/>
            <person name="Adams M.D."/>
            <person name="Hunkapiller M.W."/>
            <person name="Myers E.W."/>
            <person name="Venter J.C."/>
        </authorList>
    </citation>
    <scope>NUCLEOTIDE SEQUENCE [LARGE SCALE GENOMIC DNA]</scope>
</reference>
<reference key="3">
    <citation type="journal article" date="2004" name="Genome Res.">
        <title>The status, quality, and expansion of the NIH full-length cDNA project: the Mammalian Gene Collection (MGC).</title>
        <authorList>
            <consortium name="The MGC Project Team"/>
        </authorList>
    </citation>
    <scope>NUCLEOTIDE SEQUENCE [LARGE SCALE MRNA]</scope>
</reference>
<reference key="4">
    <citation type="submission" date="2001-09" db="EMBL/GenBank/DDBJ databases">
        <title>Conservation of the ART gene family across mammalian species.</title>
        <authorList>
            <person name="Kuehl M."/>
            <person name="Glowacki G."/>
            <person name="Haag F."/>
            <person name="Koch-Nolte F."/>
        </authorList>
    </citation>
    <scope>NUCLEOTIDE SEQUENCE [MRNA] OF 122-223</scope>
</reference>
<reference key="5">
    <citation type="journal article" date="2010" name="Trends Biochem. Sci.">
        <title>Toward a unified nomenclature for mammalian ADP-ribosyltransferases.</title>
        <authorList>
            <person name="Hottiger M.O."/>
            <person name="Hassa P.O."/>
            <person name="Luscher B."/>
            <person name="Schuler H."/>
            <person name="Koch-Nolte F."/>
        </authorList>
    </citation>
    <scope>NOMENCLATURE</scope>
</reference>
<reference key="6">
    <citation type="journal article" date="2012" name="Mol. Biol. Rep.">
        <title>Glucagon like-peptide-1 receptor is covalently modified by endogenous mono-ADP-ribosyltransferase.</title>
        <authorList>
            <person name="Dezelak M."/>
            <person name="Bavec A."/>
        </authorList>
    </citation>
    <scope>FUNCTION</scope>
</reference>
<keyword id="KW-1015">Disulfide bond</keyword>
<keyword id="KW-0325">Glycoprotein</keyword>
<keyword id="KW-0328">Glycosyltransferase</keyword>
<keyword id="KW-0336">GPI-anchor</keyword>
<keyword id="KW-0449">Lipoprotein</keyword>
<keyword id="KW-0472">Membrane</keyword>
<keyword id="KW-0520">NAD</keyword>
<keyword id="KW-0521">NADP</keyword>
<keyword id="KW-0548">Nucleotidyltransferase</keyword>
<keyword id="KW-1267">Proteomics identification</keyword>
<keyword id="KW-1185">Reference proteome</keyword>
<keyword id="KW-0703">Sarcoplasmic reticulum</keyword>
<keyword id="KW-0732">Signal</keyword>
<keyword id="KW-0808">Transferase</keyword>
<feature type="signal peptide" evidence="2">
    <location>
        <begin position="1"/>
        <end position="22"/>
    </location>
</feature>
<feature type="chain" id="PRO_0000019311" description="GPI-linked NAD(P)(+)--arginine ADP-ribosyltransferase 1">
    <location>
        <begin position="23"/>
        <end position="295"/>
    </location>
</feature>
<feature type="propeptide" id="PRO_0000019312" description="Removed in mature form" evidence="2">
    <location>
        <begin position="296"/>
        <end position="327"/>
    </location>
</feature>
<feature type="domain" description="TR mART core" evidence="3">
    <location>
        <begin position="73"/>
        <end position="273"/>
    </location>
</feature>
<feature type="active site" evidence="3">
    <location>
        <position position="179"/>
    </location>
</feature>
<feature type="active site" evidence="3">
    <location>
        <position position="202"/>
    </location>
</feature>
<feature type="active site" evidence="3">
    <location>
        <position position="240"/>
    </location>
</feature>
<feature type="binding site" evidence="1">
    <location>
        <position position="121"/>
    </location>
    <ligand>
        <name>NAD(+)</name>
        <dbReference type="ChEBI" id="CHEBI:57540"/>
    </ligand>
</feature>
<feature type="binding site" evidence="1">
    <location>
        <position position="179"/>
    </location>
    <ligand>
        <name>NAD(+)</name>
        <dbReference type="ChEBI" id="CHEBI:57540"/>
    </ligand>
</feature>
<feature type="binding site" evidence="1">
    <location>
        <position position="233"/>
    </location>
    <ligand>
        <name>NAD(+)</name>
        <dbReference type="ChEBI" id="CHEBI:57540"/>
    </ligand>
</feature>
<feature type="lipid moiety-binding region" description="GPI-anchor amidated serine" evidence="2">
    <location>
        <position position="295"/>
    </location>
</feature>
<feature type="glycosylation site" description="N-linked (GlcNAc...) asparagine" evidence="2">
    <location>
        <position position="65"/>
    </location>
</feature>
<feature type="glycosylation site" description="N-linked (GlcNAc...) asparagine" evidence="2">
    <location>
        <position position="253"/>
    </location>
</feature>
<feature type="disulfide bond" evidence="1">
    <location>
        <begin position="53"/>
        <end position="277"/>
    </location>
</feature>
<feature type="disulfide bond" evidence="1">
    <location>
        <begin position="174"/>
        <end position="224"/>
    </location>
</feature>
<feature type="sequence variant" id="VAR_034125" description="In dbSNP:rs35123761.">
    <original>P</original>
    <variation>L</variation>
    <location>
        <position position="105"/>
    </location>
</feature>
<feature type="sequence variant" id="VAR_034126" description="In dbSNP:rs35619488.">
    <original>P</original>
    <variation>R</variation>
    <location>
        <position position="126"/>
    </location>
</feature>
<feature type="sequence variant" id="VAR_053526" description="In dbSNP:rs2280134." evidence="5">
    <original>L</original>
    <variation>P</variation>
    <location>
        <position position="257"/>
    </location>
</feature>
<accession>P52961</accession>
<accession>Q6NTD2</accession>
<accession>Q96KT9</accession>
<proteinExistence type="evidence at protein level"/>
<comment type="function">
    <text evidence="4">Has ADP-ribosyltransferase activity toward GLP1R.</text>
</comment>
<comment type="catalytic activity">
    <reaction>
        <text>L-arginyl-[protein] + NAD(+) = N(omega)-(ADP-D-ribosyl)-L-arginyl-[protein] + nicotinamide + H(+)</text>
        <dbReference type="Rhea" id="RHEA:19149"/>
        <dbReference type="Rhea" id="RHEA-COMP:10532"/>
        <dbReference type="Rhea" id="RHEA-COMP:15087"/>
        <dbReference type="ChEBI" id="CHEBI:15378"/>
        <dbReference type="ChEBI" id="CHEBI:17154"/>
        <dbReference type="ChEBI" id="CHEBI:29965"/>
        <dbReference type="ChEBI" id="CHEBI:57540"/>
        <dbReference type="ChEBI" id="CHEBI:142554"/>
        <dbReference type="EC" id="2.4.2.31"/>
    </reaction>
</comment>
<comment type="subcellular location">
    <subcellularLocation>
        <location>Sarcoplasmic reticulum membrane</location>
        <topology>Lipid-anchor</topology>
        <topology>GPI-anchor</topology>
    </subcellularLocation>
</comment>
<comment type="similarity">
    <text evidence="6">Belongs to the Arg-specific ADP-ribosyltransferase family.</text>
</comment>
<protein>
    <recommendedName>
        <fullName>GPI-linked NAD(P)(+)--arginine ADP-ribosyltransferase 1</fullName>
        <ecNumber>2.4.2.31</ecNumber>
    </recommendedName>
    <alternativeName>
        <fullName>ADP-ribosyltransferase C2 and C3 toxin-like 1</fullName>
        <shortName>ARTC1</shortName>
    </alternativeName>
    <alternativeName>
        <fullName>Mono(ADP-ribosyl)transferase 1</fullName>
    </alternativeName>
    <cdAntigenName>CD296</cdAntigenName>
</protein>
<evidence type="ECO:0000250" key="1"/>
<evidence type="ECO:0000255" key="2"/>
<evidence type="ECO:0000255" key="3">
    <source>
        <dbReference type="PROSITE-ProRule" id="PRU01340"/>
    </source>
</evidence>
<evidence type="ECO:0000269" key="4">
    <source>
    </source>
</evidence>
<evidence type="ECO:0000269" key="5">
    <source>
    </source>
</evidence>
<evidence type="ECO:0000305" key="6"/>
<gene>
    <name type="primary">ART1</name>
</gene>